<evidence type="ECO:0000250" key="1"/>
<evidence type="ECO:0000255" key="2"/>
<evidence type="ECO:0000255" key="3">
    <source>
        <dbReference type="PROSITE-ProRule" id="PRU00521"/>
    </source>
</evidence>
<dbReference type="EMBL" id="DQ119288">
    <property type="protein sequence ID" value="AAZ09449.1"/>
    <property type="molecule type" value="Genomic_DNA"/>
</dbReference>
<dbReference type="RefSeq" id="NP_001025471.1">
    <property type="nucleotide sequence ID" value="NM_001030300.1"/>
</dbReference>
<dbReference type="RefSeq" id="XP_015316236.1">
    <property type="nucleotide sequence ID" value="XM_015460750.1"/>
</dbReference>
<dbReference type="SMR" id="Q4EW11"/>
<dbReference type="FunCoup" id="Q4EW11">
    <property type="interactions" value="69"/>
</dbReference>
<dbReference type="STRING" id="9913.ENSBTAP00000055441"/>
<dbReference type="GlyCosmos" id="Q4EW11">
    <property type="glycosylation" value="2 sites, No reported glycans"/>
</dbReference>
<dbReference type="GlyGen" id="Q4EW11">
    <property type="glycosylation" value="2 sites"/>
</dbReference>
<dbReference type="PaxDb" id="9913-ENSBTAP00000055441"/>
<dbReference type="Ensembl" id="ENSBTAT00000065752.3">
    <property type="protein sequence ID" value="ENSBTAP00000055441.1"/>
    <property type="gene ID" value="ENSBTAG00000047842.3"/>
</dbReference>
<dbReference type="GeneID" id="510397"/>
<dbReference type="KEGG" id="bta:510397"/>
<dbReference type="CTD" id="2834"/>
<dbReference type="VEuPathDB" id="HostDB:ENSBTAG00000047842"/>
<dbReference type="VGNC" id="VGNC:33345">
    <property type="gene designation" value="PRLHR"/>
</dbReference>
<dbReference type="eggNOG" id="KOG3656">
    <property type="taxonomic scope" value="Eukaryota"/>
</dbReference>
<dbReference type="GeneTree" id="ENSGT00940000162008"/>
<dbReference type="HOGENOM" id="CLU_009579_6_1_1"/>
<dbReference type="InParanoid" id="Q4EW11"/>
<dbReference type="OMA" id="WPRKIVP"/>
<dbReference type="OrthoDB" id="5975336at2759"/>
<dbReference type="TreeFam" id="TF315303"/>
<dbReference type="Reactome" id="R-BTA-375276">
    <property type="pathway name" value="Peptide ligand-binding receptors"/>
</dbReference>
<dbReference type="Proteomes" id="UP000009136">
    <property type="component" value="Chromosome 26"/>
</dbReference>
<dbReference type="Bgee" id="ENSBTAG00000047842">
    <property type="expression patterns" value="Expressed in oviduct epithelium and 4 other cell types or tissues"/>
</dbReference>
<dbReference type="GO" id="GO:0005929">
    <property type="term" value="C:cilium"/>
    <property type="evidence" value="ECO:0007669"/>
    <property type="project" value="Ensembl"/>
</dbReference>
<dbReference type="GO" id="GO:0043005">
    <property type="term" value="C:neuron projection"/>
    <property type="evidence" value="ECO:0000318"/>
    <property type="project" value="GO_Central"/>
</dbReference>
<dbReference type="GO" id="GO:0005886">
    <property type="term" value="C:plasma membrane"/>
    <property type="evidence" value="ECO:0000318"/>
    <property type="project" value="GO_Central"/>
</dbReference>
<dbReference type="GO" id="GO:0042923">
    <property type="term" value="F:neuropeptide binding"/>
    <property type="evidence" value="ECO:0000318"/>
    <property type="project" value="GO_Central"/>
</dbReference>
<dbReference type="GO" id="GO:0008188">
    <property type="term" value="F:neuropeptide receptor activity"/>
    <property type="evidence" value="ECO:0000318"/>
    <property type="project" value="GO_Central"/>
</dbReference>
<dbReference type="GO" id="GO:0004983">
    <property type="term" value="F:neuropeptide Y receptor activity"/>
    <property type="evidence" value="ECO:0007669"/>
    <property type="project" value="InterPro"/>
</dbReference>
<dbReference type="GO" id="GO:0007631">
    <property type="term" value="P:feeding behavior"/>
    <property type="evidence" value="ECO:0007669"/>
    <property type="project" value="Ensembl"/>
</dbReference>
<dbReference type="GO" id="GO:0007186">
    <property type="term" value="P:G protein-coupled receptor signaling pathway"/>
    <property type="evidence" value="ECO:0000318"/>
    <property type="project" value="GO_Central"/>
</dbReference>
<dbReference type="GO" id="GO:0042445">
    <property type="term" value="P:hormone metabolic process"/>
    <property type="evidence" value="ECO:0007669"/>
    <property type="project" value="Ensembl"/>
</dbReference>
<dbReference type="CDD" id="cd15394">
    <property type="entry name" value="7tmA_PrRP_R"/>
    <property type="match status" value="1"/>
</dbReference>
<dbReference type="FunFam" id="1.20.1070.10:FF:000119">
    <property type="entry name" value="Prolactin releasing hormone receptor"/>
    <property type="match status" value="1"/>
</dbReference>
<dbReference type="Gene3D" id="1.20.1070.10">
    <property type="entry name" value="Rhodopsin 7-helix transmembrane proteins"/>
    <property type="match status" value="1"/>
</dbReference>
<dbReference type="InterPro" id="IPR000276">
    <property type="entry name" value="GPCR_Rhodpsn"/>
</dbReference>
<dbReference type="InterPro" id="IPR017452">
    <property type="entry name" value="GPCR_Rhodpsn_7TM"/>
</dbReference>
<dbReference type="InterPro" id="IPR001402">
    <property type="entry name" value="Prolrel_pep_rcpt"/>
</dbReference>
<dbReference type="PANTHER" id="PTHR24235">
    <property type="entry name" value="NEUROPEPTIDE Y RECEPTOR"/>
    <property type="match status" value="1"/>
</dbReference>
<dbReference type="PANTHER" id="PTHR24235:SF11">
    <property type="entry name" value="PROLACTIN-RELEASING PEPTIDE RECEPTOR"/>
    <property type="match status" value="1"/>
</dbReference>
<dbReference type="Pfam" id="PF00001">
    <property type="entry name" value="7tm_1"/>
    <property type="match status" value="1"/>
</dbReference>
<dbReference type="PRINTS" id="PR00237">
    <property type="entry name" value="GPCRRHODOPSN"/>
</dbReference>
<dbReference type="PRINTS" id="PR01018">
    <property type="entry name" value="PRPRECEPTOR"/>
</dbReference>
<dbReference type="SMART" id="SM01381">
    <property type="entry name" value="7TM_GPCR_Srsx"/>
    <property type="match status" value="1"/>
</dbReference>
<dbReference type="SUPFAM" id="SSF81321">
    <property type="entry name" value="Family A G protein-coupled receptor-like"/>
    <property type="match status" value="1"/>
</dbReference>
<dbReference type="PROSITE" id="PS00237">
    <property type="entry name" value="G_PROTEIN_RECEP_F1_1"/>
    <property type="match status" value="1"/>
</dbReference>
<dbReference type="PROSITE" id="PS50262">
    <property type="entry name" value="G_PROTEIN_RECEP_F1_2"/>
    <property type="match status" value="1"/>
</dbReference>
<sequence length="370" mass="41226">MASLPTQGPAAPDFFNGLLPASSSPVNQSSETVVGNGSAAGPGSQAITPFQSLQLVHQLKGLIVLLYSIVVVVGLVGNCLLVLVIARVRRLHNVTNFLIGNLALSDVLMCTACVPLTLAYAFEPRGWVFGGGLCHLVFFLQPVTVYVSVFTLTTIAVDRYVVLVHPLRRRISLRFSAYAVLAIWALSAVLALPAALHTYHVELKPHRVRLCEEFWGSQERQRQLYAWGLLLVTYLLPLLVILLSYVRVSVNLRNRVVPGCVTQSQADWDRARRRRTFCLLVVVVVVFAVCWLPLHVFNLLRDLDPHAIDPYAFGLVQLLCHWLAMSSACYNPFIYAWLHDSFREELRKLLLAWPRKIAPHGQSMTVSVVI</sequence>
<gene>
    <name type="primary">PRLHR</name>
    <name type="synonym">GPR10</name>
</gene>
<name>PRLHR_BOVIN</name>
<organism>
    <name type="scientific">Bos taurus</name>
    <name type="common">Bovine</name>
    <dbReference type="NCBI Taxonomy" id="9913"/>
    <lineage>
        <taxon>Eukaryota</taxon>
        <taxon>Metazoa</taxon>
        <taxon>Chordata</taxon>
        <taxon>Craniata</taxon>
        <taxon>Vertebrata</taxon>
        <taxon>Euteleostomi</taxon>
        <taxon>Mammalia</taxon>
        <taxon>Eutheria</taxon>
        <taxon>Laurasiatheria</taxon>
        <taxon>Artiodactyla</taxon>
        <taxon>Ruminantia</taxon>
        <taxon>Pecora</taxon>
        <taxon>Bovidae</taxon>
        <taxon>Bovinae</taxon>
        <taxon>Bos</taxon>
    </lineage>
</organism>
<proteinExistence type="inferred from homology"/>
<feature type="chain" id="PRO_0000069523" description="Prolactin-releasing peptide receptor">
    <location>
        <begin position="1"/>
        <end position="370"/>
    </location>
</feature>
<feature type="topological domain" description="Extracellular" evidence="2">
    <location>
        <begin position="1"/>
        <end position="62"/>
    </location>
</feature>
<feature type="transmembrane region" description="Helical; Name=1" evidence="2">
    <location>
        <begin position="63"/>
        <end position="83"/>
    </location>
</feature>
<feature type="topological domain" description="Cytoplasmic" evidence="2">
    <location>
        <begin position="84"/>
        <end position="101"/>
    </location>
</feature>
<feature type="transmembrane region" description="Helical; Name=2" evidence="2">
    <location>
        <begin position="102"/>
        <end position="122"/>
    </location>
</feature>
<feature type="topological domain" description="Extracellular" evidence="2">
    <location>
        <begin position="123"/>
        <end position="126"/>
    </location>
</feature>
<feature type="transmembrane region" description="Helical; Name=3" evidence="2">
    <location>
        <begin position="127"/>
        <end position="147"/>
    </location>
</feature>
<feature type="topological domain" description="Cytoplasmic" evidence="2">
    <location>
        <begin position="148"/>
        <end position="175"/>
    </location>
</feature>
<feature type="transmembrane region" description="Helical; Name=4" evidence="2">
    <location>
        <begin position="176"/>
        <end position="196"/>
    </location>
</feature>
<feature type="topological domain" description="Extracellular" evidence="2">
    <location>
        <begin position="197"/>
        <end position="225"/>
    </location>
</feature>
<feature type="transmembrane region" description="Helical; Name=5" evidence="2">
    <location>
        <begin position="226"/>
        <end position="246"/>
    </location>
</feature>
<feature type="topological domain" description="Cytoplasmic" evidence="2">
    <location>
        <begin position="247"/>
        <end position="276"/>
    </location>
</feature>
<feature type="transmembrane region" description="Helical; Name=6" evidence="2">
    <location>
        <begin position="277"/>
        <end position="297"/>
    </location>
</feature>
<feature type="topological domain" description="Extracellular" evidence="2">
    <location>
        <begin position="298"/>
        <end position="317"/>
    </location>
</feature>
<feature type="transmembrane region" description="Helical; Name=7" evidence="2">
    <location>
        <begin position="318"/>
        <end position="338"/>
    </location>
</feature>
<feature type="topological domain" description="Cytoplasmic" evidence="2">
    <location>
        <begin position="339"/>
        <end position="369"/>
    </location>
</feature>
<feature type="region of interest" description="Required for interaction with GRIP1, GRIP2 and PICK1" evidence="1">
    <location>
        <begin position="365"/>
        <end position="370"/>
    </location>
</feature>
<feature type="glycosylation site" description="N-linked (GlcNAc...) asparagine" evidence="2">
    <location>
        <position position="27"/>
    </location>
</feature>
<feature type="glycosylation site" description="N-linked (GlcNAc...) asparagine" evidence="2">
    <location>
        <position position="36"/>
    </location>
</feature>
<feature type="disulfide bond" evidence="3">
    <location>
        <begin position="134"/>
        <end position="211"/>
    </location>
</feature>
<protein>
    <recommendedName>
        <fullName>Prolactin-releasing peptide receptor</fullName>
        <shortName>PrRP receptor</shortName>
        <shortName>PrRPR</shortName>
    </recommendedName>
    <alternativeName>
        <fullName>G-protein coupled receptor 10</fullName>
    </alternativeName>
</protein>
<accession>Q4EW11</accession>
<comment type="function">
    <text evidence="1">Receptor for prolactin-releasing peptide (PrRP). Implicated in lactation, regulation of food intake and pain-signal processing (By similarity).</text>
</comment>
<comment type="subunit">
    <text evidence="1">Interacts through its C-terminal region with the PDZ domain-containing proteins GRIP1, GRIP2 and PICK1. Interacts with PDZ domains 4 and 5 of GRIP1 and with the PDZ domain of PICK1 (By similarity).</text>
</comment>
<comment type="subcellular location">
    <subcellularLocation>
        <location>Cell membrane</location>
        <topology>Multi-pass membrane protein</topology>
    </subcellularLocation>
</comment>
<comment type="similarity">
    <text evidence="3">Belongs to the G-protein coupled receptor 1 family.</text>
</comment>
<keyword id="KW-1003">Cell membrane</keyword>
<keyword id="KW-1015">Disulfide bond</keyword>
<keyword id="KW-0297">G-protein coupled receptor</keyword>
<keyword id="KW-0325">Glycoprotein</keyword>
<keyword id="KW-0472">Membrane</keyword>
<keyword id="KW-0675">Receptor</keyword>
<keyword id="KW-1185">Reference proteome</keyword>
<keyword id="KW-0807">Transducer</keyword>
<keyword id="KW-0812">Transmembrane</keyword>
<keyword id="KW-1133">Transmembrane helix</keyword>
<reference key="1">
    <citation type="submission" date="2005-07" db="EMBL/GenBank/DDBJ databases">
        <authorList>
            <person name="Feng H."/>
            <person name="Yuan Z."/>
            <person name="Xiao S.D."/>
            <person name="Ying Y."/>
            <person name="Chun W.Y."/>
        </authorList>
    </citation>
    <scope>NUCLEOTIDE SEQUENCE [GENOMIC DNA]</scope>
    <source>
        <tissue>Pituitary</tissue>
    </source>
</reference>